<organismHost>
    <name type="scientific">Aves</name>
    <dbReference type="NCBI Taxonomy" id="8782"/>
</organismHost>
<organismHost>
    <name type="scientific">Homo sapiens</name>
    <name type="common">Human</name>
    <dbReference type="NCBI Taxonomy" id="9606"/>
</organismHost>
<organismHost>
    <name type="scientific">Sus scrofa</name>
    <name type="common">Pig</name>
    <dbReference type="NCBI Taxonomy" id="9823"/>
</organismHost>
<accession>Q07FI0</accession>
<protein>
    <recommendedName>
        <fullName evidence="1">Nuclear export protein</fullName>
        <shortName evidence="1">NEP</shortName>
    </recommendedName>
    <alternativeName>
        <fullName evidence="1">Non-structural protein 2</fullName>
        <shortName evidence="1">NS2</shortName>
    </alternativeName>
</protein>
<dbReference type="EMBL" id="CY016240">
    <property type="protein sequence ID" value="ABI95267.1"/>
    <property type="molecule type" value="Other_RNA"/>
</dbReference>
<dbReference type="SMR" id="Q07FI0"/>
<dbReference type="Proteomes" id="UP000008586">
    <property type="component" value="Genome"/>
</dbReference>
<dbReference type="GO" id="GO:0042025">
    <property type="term" value="C:host cell nucleus"/>
    <property type="evidence" value="ECO:0007669"/>
    <property type="project" value="UniProtKB-SubCell"/>
</dbReference>
<dbReference type="GO" id="GO:0044423">
    <property type="term" value="C:virion component"/>
    <property type="evidence" value="ECO:0007669"/>
    <property type="project" value="UniProtKB-UniRule"/>
</dbReference>
<dbReference type="GO" id="GO:0039675">
    <property type="term" value="P:exit of virus from host cell nucleus through nuclear pore"/>
    <property type="evidence" value="ECO:0007669"/>
    <property type="project" value="UniProtKB-UniRule"/>
</dbReference>
<dbReference type="Gene3D" id="1.10.287.230">
    <property type="match status" value="1"/>
</dbReference>
<dbReference type="Gene3D" id="1.10.287.10">
    <property type="entry name" value="S15/NS1, RNA-binding"/>
    <property type="match status" value="1"/>
</dbReference>
<dbReference type="HAMAP" id="MF_04067">
    <property type="entry name" value="INFV_NEP"/>
    <property type="match status" value="1"/>
</dbReference>
<dbReference type="InterPro" id="IPR000968">
    <property type="entry name" value="Flu_NS2"/>
</dbReference>
<dbReference type="Pfam" id="PF00601">
    <property type="entry name" value="Flu_NS2"/>
    <property type="match status" value="1"/>
</dbReference>
<dbReference type="SUPFAM" id="SSF101156">
    <property type="entry name" value="Nonstructural protein ns2, Nep, M1-binding domain"/>
    <property type="match status" value="1"/>
</dbReference>
<keyword id="KW-0025">Alternative splicing</keyword>
<keyword id="KW-1048">Host nucleus</keyword>
<keyword id="KW-0945">Host-virus interaction</keyword>
<keyword id="KW-0813">Transport</keyword>
<keyword id="KW-0946">Virion</keyword>
<name>NEP_I96A3</name>
<organism>
    <name type="scientific">Influenza A virus (strain A/China:Nanchang/11/1996 H1N1)</name>
    <dbReference type="NCBI Taxonomy" id="394786"/>
    <lineage>
        <taxon>Viruses</taxon>
        <taxon>Riboviria</taxon>
        <taxon>Orthornavirae</taxon>
        <taxon>Negarnaviricota</taxon>
        <taxon>Polyploviricotina</taxon>
        <taxon>Insthoviricetes</taxon>
        <taxon>Articulavirales</taxon>
        <taxon>Orthomyxoviridae</taxon>
        <taxon>Alphainfluenzavirus</taxon>
        <taxon>Alphainfluenzavirus influenzae</taxon>
        <taxon>Influenza A virus</taxon>
    </lineage>
</organism>
<comment type="function">
    <text evidence="1">Mediates the nuclear export of encapsidated genomic RNAs (ribonucleoproteins, RNPs). Acts as an adapter between viral RNPs complexes and the nuclear export machinery of the cell. Possesses no intrinsic RNA-binding activity, but includes a C-terminal M1-binding domain. This domain is believed to allow recognition of RNPs bound to the protein M1. Since protein M1 is not available in large quantities before late stages of infection, such an indirect recognition mechanism probably ensures that genomic RNPs are not exported from the host nucleus until sufficient quantities of viral mRNA and progeny genomic RNA have been synthesized. Furthermore, the RNPs enter the host cytoplasm only when associated with the M1 protein that is necessary to guide them to the plasma membrane. May down-regulate viral RNA synthesis when overproduced.</text>
</comment>
<comment type="subunit">
    <text evidence="1">Interacts with protein M1. May interact with host nucleoporin RAB/HRB and exportin XPO1/CRM1.</text>
</comment>
<comment type="subcellular location">
    <subcellularLocation>
        <location evidence="1">Virion</location>
    </subcellularLocation>
    <subcellularLocation>
        <location evidence="1">Host nucleus</location>
    </subcellularLocation>
</comment>
<comment type="alternative products">
    <event type="alternative splicing"/>
    <isoform>
        <id>Q07FI0-1</id>
        <name>NEP</name>
        <name>NS2</name>
        <sequence type="displayed"/>
    </isoform>
    <isoform>
        <id>Q07FH9-1</id>
        <name>NS1</name>
        <sequence type="external"/>
    </isoform>
</comment>
<comment type="miscellaneous">
    <text>Average number present in a viral particle is estimated to be 130-200 molecules.</text>
</comment>
<comment type="similarity">
    <text evidence="1">Belongs to the influenza viruses NEP family.</text>
</comment>
<reference key="1">
    <citation type="submission" date="2006-09" db="EMBL/GenBank/DDBJ databases">
        <title>The NIAID influenza genome sequencing project.</title>
        <authorList>
            <person name="Ghedin E."/>
            <person name="Spiro D."/>
            <person name="Miller N."/>
            <person name="Zaborsky J."/>
            <person name="Feldblyum T."/>
            <person name="Subbu V."/>
            <person name="Shumway M."/>
            <person name="Sparenborg J."/>
            <person name="Groveman L."/>
            <person name="Halpin R."/>
            <person name="Sitz J."/>
            <person name="Koo H."/>
            <person name="Salzberg S.L."/>
            <person name="Webster R.G."/>
            <person name="Hoffmann E."/>
            <person name="Krauss S."/>
            <person name="Naeve C."/>
            <person name="Bao Y."/>
            <person name="Bolotov P."/>
            <person name="Dernovoy D."/>
            <person name="Kiryutin B."/>
            <person name="Lipman D.J."/>
            <person name="Tatusova T."/>
        </authorList>
    </citation>
    <scope>NUCLEOTIDE SEQUENCE [GENOMIC RNA]</scope>
</reference>
<reference key="2">
    <citation type="submission" date="2006-09" db="EMBL/GenBank/DDBJ databases">
        <authorList>
            <consortium name="The NIAID Influenza Genome Sequencing Consortium"/>
        </authorList>
    </citation>
    <scope>NUCLEOTIDE SEQUENCE [GENOMIC RNA]</scope>
</reference>
<feature type="chain" id="PRO_0000372960" description="Nuclear export protein">
    <location>
        <begin position="1"/>
        <end position="121"/>
    </location>
</feature>
<feature type="short sequence motif" description="Nuclear export signal" evidence="1">
    <location>
        <begin position="12"/>
        <end position="21"/>
    </location>
</feature>
<feature type="short sequence motif" description="Nuclear export signal" evidence="1">
    <location>
        <begin position="85"/>
        <end position="94"/>
    </location>
</feature>
<sequence>MDSHTVSSFQDILMRMSKMQLGSSSGDLNGMITQFESLKLYRDSLGEAVMRMGDLHSLQHRNGKWREQLGQKFEEIRWLIEEVRHKLKTTENSFEQITFMQALQLLFEVEQEIRTFSFQLI</sequence>
<evidence type="ECO:0000255" key="1">
    <source>
        <dbReference type="HAMAP-Rule" id="MF_04067"/>
    </source>
</evidence>
<gene>
    <name evidence="1" type="primary">NS</name>
</gene>
<proteinExistence type="inferred from homology"/>